<organism>
    <name type="scientific">Synechococcus elongatus (strain ATCC 33912 / PCC 7942 / FACHB-805)</name>
    <name type="common">Anacystis nidulans R2</name>
    <dbReference type="NCBI Taxonomy" id="1140"/>
    <lineage>
        <taxon>Bacteria</taxon>
        <taxon>Bacillati</taxon>
        <taxon>Cyanobacteriota</taxon>
        <taxon>Cyanophyceae</taxon>
        <taxon>Synechococcales</taxon>
        <taxon>Synechococcaceae</taxon>
        <taxon>Synechococcus</taxon>
    </lineage>
</organism>
<gene>
    <name evidence="1" type="primary">rsmG</name>
    <name type="ordered locus">Synpcc7942_0267</name>
</gene>
<accession>Q31RM0</accession>
<comment type="function">
    <text evidence="1">Specifically methylates the N7 position of a guanine in 16S rRNA.</text>
</comment>
<comment type="subcellular location">
    <subcellularLocation>
        <location evidence="1">Cytoplasm</location>
    </subcellularLocation>
</comment>
<comment type="similarity">
    <text evidence="1">Belongs to the methyltransferase superfamily. RNA methyltransferase RsmG family.</text>
</comment>
<evidence type="ECO:0000255" key="1">
    <source>
        <dbReference type="HAMAP-Rule" id="MF_00074"/>
    </source>
</evidence>
<dbReference type="EC" id="2.1.1.-" evidence="1"/>
<dbReference type="EMBL" id="CP000100">
    <property type="protein sequence ID" value="ABB56299.1"/>
    <property type="molecule type" value="Genomic_DNA"/>
</dbReference>
<dbReference type="RefSeq" id="WP_011243558.1">
    <property type="nucleotide sequence ID" value="NZ_JACJTX010000002.1"/>
</dbReference>
<dbReference type="SMR" id="Q31RM0"/>
<dbReference type="STRING" id="1140.Synpcc7942_0267"/>
<dbReference type="PaxDb" id="1140-Synpcc7942_0267"/>
<dbReference type="GeneID" id="72429082"/>
<dbReference type="KEGG" id="syf:Synpcc7942_0267"/>
<dbReference type="eggNOG" id="COG0357">
    <property type="taxonomic scope" value="Bacteria"/>
</dbReference>
<dbReference type="HOGENOM" id="CLU_065341_0_2_3"/>
<dbReference type="OrthoDB" id="9808773at2"/>
<dbReference type="BioCyc" id="SYNEL:SYNPCC7942_0267-MONOMER"/>
<dbReference type="Proteomes" id="UP000889800">
    <property type="component" value="Chromosome"/>
</dbReference>
<dbReference type="GO" id="GO:0005829">
    <property type="term" value="C:cytosol"/>
    <property type="evidence" value="ECO:0007669"/>
    <property type="project" value="TreeGrafter"/>
</dbReference>
<dbReference type="GO" id="GO:0070043">
    <property type="term" value="F:rRNA (guanine-N7-)-methyltransferase activity"/>
    <property type="evidence" value="ECO:0007669"/>
    <property type="project" value="UniProtKB-UniRule"/>
</dbReference>
<dbReference type="CDD" id="cd02440">
    <property type="entry name" value="AdoMet_MTases"/>
    <property type="match status" value="1"/>
</dbReference>
<dbReference type="FunFam" id="3.40.50.150:FF:000041">
    <property type="entry name" value="Ribosomal RNA small subunit methyltransferase G"/>
    <property type="match status" value="1"/>
</dbReference>
<dbReference type="Gene3D" id="3.40.50.150">
    <property type="entry name" value="Vaccinia Virus protein VP39"/>
    <property type="match status" value="1"/>
</dbReference>
<dbReference type="HAMAP" id="MF_00074">
    <property type="entry name" value="16SrRNA_methyltr_G"/>
    <property type="match status" value="1"/>
</dbReference>
<dbReference type="InterPro" id="IPR003682">
    <property type="entry name" value="rRNA_ssu_MeTfrase_G"/>
</dbReference>
<dbReference type="InterPro" id="IPR029063">
    <property type="entry name" value="SAM-dependent_MTases_sf"/>
</dbReference>
<dbReference type="NCBIfam" id="TIGR00138">
    <property type="entry name" value="rsmG_gidB"/>
    <property type="match status" value="1"/>
</dbReference>
<dbReference type="PANTHER" id="PTHR31760">
    <property type="entry name" value="S-ADENOSYL-L-METHIONINE-DEPENDENT METHYLTRANSFERASES SUPERFAMILY PROTEIN"/>
    <property type="match status" value="1"/>
</dbReference>
<dbReference type="PANTHER" id="PTHR31760:SF0">
    <property type="entry name" value="S-ADENOSYL-L-METHIONINE-DEPENDENT METHYLTRANSFERASES SUPERFAMILY PROTEIN"/>
    <property type="match status" value="1"/>
</dbReference>
<dbReference type="Pfam" id="PF02527">
    <property type="entry name" value="GidB"/>
    <property type="match status" value="1"/>
</dbReference>
<dbReference type="PIRSF" id="PIRSF003078">
    <property type="entry name" value="GidB"/>
    <property type="match status" value="1"/>
</dbReference>
<dbReference type="SUPFAM" id="SSF53335">
    <property type="entry name" value="S-adenosyl-L-methionine-dependent methyltransferases"/>
    <property type="match status" value="1"/>
</dbReference>
<protein>
    <recommendedName>
        <fullName evidence="1">Ribosomal RNA small subunit methyltransferase G</fullName>
        <ecNumber evidence="1">2.1.1.-</ecNumber>
    </recommendedName>
    <alternativeName>
        <fullName evidence="1">16S rRNA 7-methylguanosine methyltransferase</fullName>
        <shortName evidence="1">16S rRNA m7G methyltransferase</shortName>
    </alternativeName>
</protein>
<feature type="chain" id="PRO_1000010230" description="Ribosomal RNA small subunit methyltransferase G">
    <location>
        <begin position="1"/>
        <end position="242"/>
    </location>
</feature>
<feature type="binding site" evidence="1">
    <location>
        <position position="81"/>
    </location>
    <ligand>
        <name>S-adenosyl-L-methionine</name>
        <dbReference type="ChEBI" id="CHEBI:59789"/>
    </ligand>
</feature>
<feature type="binding site" evidence="1">
    <location>
        <position position="86"/>
    </location>
    <ligand>
        <name>S-adenosyl-L-methionine</name>
        <dbReference type="ChEBI" id="CHEBI:59789"/>
    </ligand>
</feature>
<feature type="binding site" evidence="1">
    <location>
        <begin position="104"/>
        <end position="106"/>
    </location>
    <ligand>
        <name>S-adenosyl-L-methionine</name>
        <dbReference type="ChEBI" id="CHEBI:59789"/>
    </ligand>
</feature>
<feature type="binding site" evidence="1">
    <location>
        <begin position="132"/>
        <end position="133"/>
    </location>
    <ligand>
        <name>S-adenosyl-L-methionine</name>
        <dbReference type="ChEBI" id="CHEBI:59789"/>
    </ligand>
</feature>
<feature type="binding site" evidence="1">
    <location>
        <position position="151"/>
    </location>
    <ligand>
        <name>S-adenosyl-L-methionine</name>
        <dbReference type="ChEBI" id="CHEBI:59789"/>
    </ligand>
</feature>
<name>RSMG_SYNE7</name>
<keyword id="KW-0963">Cytoplasm</keyword>
<keyword id="KW-0489">Methyltransferase</keyword>
<keyword id="KW-1185">Reference proteome</keyword>
<keyword id="KW-0698">rRNA processing</keyword>
<keyword id="KW-0949">S-adenosyl-L-methionine</keyword>
<keyword id="KW-0808">Transferase</keyword>
<proteinExistence type="inferred from homology"/>
<reference key="1">
    <citation type="submission" date="2005-08" db="EMBL/GenBank/DDBJ databases">
        <title>Complete sequence of chromosome 1 of Synechococcus elongatus PCC 7942.</title>
        <authorList>
            <consortium name="US DOE Joint Genome Institute"/>
            <person name="Copeland A."/>
            <person name="Lucas S."/>
            <person name="Lapidus A."/>
            <person name="Barry K."/>
            <person name="Detter J.C."/>
            <person name="Glavina T."/>
            <person name="Hammon N."/>
            <person name="Israni S."/>
            <person name="Pitluck S."/>
            <person name="Schmutz J."/>
            <person name="Larimer F."/>
            <person name="Land M."/>
            <person name="Kyrpides N."/>
            <person name="Lykidis A."/>
            <person name="Golden S."/>
            <person name="Richardson P."/>
        </authorList>
    </citation>
    <scope>NUCLEOTIDE SEQUENCE [LARGE SCALE GENOMIC DNA]</scope>
    <source>
        <strain>ATCC 33912 / PCC 7942 / FACHB-805</strain>
    </source>
</reference>
<sequence length="242" mass="26661">MTSGFALDVRNWTETLGWQPSPQQQQQFEALYHGIIAGNQRLNLTRITDPAEFTEKHLWDSLYGLRPLLTDDWSGEIIDIGTGGGFPGLPAAIALTKSRVMLLDSTRKKIQFLQTLAQELGLSNVTVAVGRAEEWGRDRRQRARYDWATIRAVGPATVCAEYCLPLLKIGGKAVLYRGQWTEEEAIALDRAVTILGGEVVDVSATFLPESGAERHCITLQKTAQTPAAYPRMVGLPSQKPLG</sequence>